<keyword id="KW-0028">Amino-acid biosynthesis</keyword>
<keyword id="KW-0057">Aromatic amino acid biosynthesis</keyword>
<keyword id="KW-0521">NADP</keyword>
<keyword id="KW-0560">Oxidoreductase</keyword>
<proteinExistence type="inferred from homology"/>
<gene>
    <name evidence="1" type="primary">aroE</name>
</gene>
<sequence length="269" mass="28629">MNTVPRYAVFGNPVAHSKSPQIHRQFALQEGVEIEYERICADTGGFAQAVEAFFADGGRGANVTVPFKQEAFALSDEHSERALAAGAVNTLILLENGKIRGDNTDGIGLTDDISKRLGVELSGKTVLLLGAGGAVRGVIPVLKEYRPARIVIANRTHTKAAEMAAHFGIEAIPLDELEGGFDIIINGTSGGLSGQLPAVSPKVFEHCTLAYDMVYGEAAEPFLAFARQSGAKQTADGLGMLVGQAAASYRLWRGFAPDVLPVVQYMREL</sequence>
<feature type="chain" id="PRO_0000136021" description="Shikimate dehydrogenase (NADP(+))">
    <location>
        <begin position="1"/>
        <end position="269"/>
    </location>
</feature>
<feature type="active site" description="Proton acceptor" evidence="1">
    <location>
        <position position="68"/>
    </location>
</feature>
<feature type="binding site" evidence="1">
    <location>
        <begin position="17"/>
        <end position="19"/>
    </location>
    <ligand>
        <name>shikimate</name>
        <dbReference type="ChEBI" id="CHEBI:36208"/>
    </ligand>
</feature>
<feature type="binding site" evidence="1">
    <location>
        <position position="64"/>
    </location>
    <ligand>
        <name>shikimate</name>
        <dbReference type="ChEBI" id="CHEBI:36208"/>
    </ligand>
</feature>
<feature type="binding site" evidence="1">
    <location>
        <position position="80"/>
    </location>
    <ligand>
        <name>NADP(+)</name>
        <dbReference type="ChEBI" id="CHEBI:58349"/>
    </ligand>
</feature>
<feature type="binding site" evidence="1">
    <location>
        <position position="89"/>
    </location>
    <ligand>
        <name>shikimate</name>
        <dbReference type="ChEBI" id="CHEBI:36208"/>
    </ligand>
</feature>
<feature type="binding site" evidence="1">
    <location>
        <position position="105"/>
    </location>
    <ligand>
        <name>shikimate</name>
        <dbReference type="ChEBI" id="CHEBI:36208"/>
    </ligand>
</feature>
<feature type="binding site" evidence="1">
    <location>
        <begin position="130"/>
        <end position="134"/>
    </location>
    <ligand>
        <name>NADP(+)</name>
        <dbReference type="ChEBI" id="CHEBI:58349"/>
    </ligand>
</feature>
<feature type="binding site" evidence="1">
    <location>
        <begin position="154"/>
        <end position="159"/>
    </location>
    <ligand>
        <name>NADP(+)</name>
        <dbReference type="ChEBI" id="CHEBI:58349"/>
    </ligand>
</feature>
<feature type="binding site" evidence="1">
    <location>
        <position position="213"/>
    </location>
    <ligand>
        <name>NADP(+)</name>
        <dbReference type="ChEBI" id="CHEBI:58349"/>
    </ligand>
</feature>
<feature type="binding site" evidence="1">
    <location>
        <position position="215"/>
    </location>
    <ligand>
        <name>shikimate</name>
        <dbReference type="ChEBI" id="CHEBI:36208"/>
    </ligand>
</feature>
<feature type="binding site" evidence="1">
    <location>
        <position position="237"/>
    </location>
    <ligand>
        <name>NADP(+)</name>
        <dbReference type="ChEBI" id="CHEBI:58349"/>
    </ligand>
</feature>
<evidence type="ECO:0000255" key="1">
    <source>
        <dbReference type="HAMAP-Rule" id="MF_00222"/>
    </source>
</evidence>
<comment type="function">
    <text evidence="1">Involved in the biosynthesis of the chorismate, which leads to the biosynthesis of aromatic amino acids. Catalyzes the reversible NADPH linked reduction of 3-dehydroshikimate (DHSA) to yield shikimate (SA).</text>
</comment>
<comment type="catalytic activity">
    <reaction evidence="1">
        <text>shikimate + NADP(+) = 3-dehydroshikimate + NADPH + H(+)</text>
        <dbReference type="Rhea" id="RHEA:17737"/>
        <dbReference type="ChEBI" id="CHEBI:15378"/>
        <dbReference type="ChEBI" id="CHEBI:16630"/>
        <dbReference type="ChEBI" id="CHEBI:36208"/>
        <dbReference type="ChEBI" id="CHEBI:57783"/>
        <dbReference type="ChEBI" id="CHEBI:58349"/>
        <dbReference type="EC" id="1.1.1.25"/>
    </reaction>
</comment>
<comment type="pathway">
    <text evidence="1">Metabolic intermediate biosynthesis; chorismate biosynthesis; chorismate from D-erythrose 4-phosphate and phosphoenolpyruvate: step 4/7.</text>
</comment>
<comment type="subunit">
    <text evidence="1">Homodimer.</text>
</comment>
<comment type="similarity">
    <text evidence="1">Belongs to the shikimate dehydrogenase family.</text>
</comment>
<accession>P95389</accession>
<dbReference type="EC" id="1.1.1.25" evidence="1"/>
<dbReference type="EMBL" id="U82848">
    <property type="protein sequence ID" value="AAC44919.1"/>
    <property type="molecule type" value="Genomic_DNA"/>
</dbReference>
<dbReference type="RefSeq" id="WP_070492665.1">
    <property type="nucleotide sequence ID" value="NZ_CP020452.2"/>
</dbReference>
<dbReference type="SMR" id="P95389"/>
<dbReference type="KEGG" id="nmj:NM96_08190"/>
<dbReference type="UniPathway" id="UPA00053">
    <property type="reaction ID" value="UER00087"/>
</dbReference>
<dbReference type="GO" id="GO:0005829">
    <property type="term" value="C:cytosol"/>
    <property type="evidence" value="ECO:0007669"/>
    <property type="project" value="TreeGrafter"/>
</dbReference>
<dbReference type="GO" id="GO:0050661">
    <property type="term" value="F:NADP binding"/>
    <property type="evidence" value="ECO:0007669"/>
    <property type="project" value="InterPro"/>
</dbReference>
<dbReference type="GO" id="GO:0004764">
    <property type="term" value="F:shikimate 3-dehydrogenase (NADP+) activity"/>
    <property type="evidence" value="ECO:0007669"/>
    <property type="project" value="UniProtKB-UniRule"/>
</dbReference>
<dbReference type="GO" id="GO:0008652">
    <property type="term" value="P:amino acid biosynthetic process"/>
    <property type="evidence" value="ECO:0007669"/>
    <property type="project" value="UniProtKB-KW"/>
</dbReference>
<dbReference type="GO" id="GO:0009073">
    <property type="term" value="P:aromatic amino acid family biosynthetic process"/>
    <property type="evidence" value="ECO:0007669"/>
    <property type="project" value="UniProtKB-KW"/>
</dbReference>
<dbReference type="GO" id="GO:0009423">
    <property type="term" value="P:chorismate biosynthetic process"/>
    <property type="evidence" value="ECO:0007669"/>
    <property type="project" value="UniProtKB-UniRule"/>
</dbReference>
<dbReference type="GO" id="GO:0019632">
    <property type="term" value="P:shikimate metabolic process"/>
    <property type="evidence" value="ECO:0007669"/>
    <property type="project" value="InterPro"/>
</dbReference>
<dbReference type="CDD" id="cd01065">
    <property type="entry name" value="NAD_bind_Shikimate_DH"/>
    <property type="match status" value="1"/>
</dbReference>
<dbReference type="FunFam" id="3.40.50.10860:FF:000006">
    <property type="entry name" value="Shikimate dehydrogenase (NADP(+))"/>
    <property type="match status" value="1"/>
</dbReference>
<dbReference type="Gene3D" id="3.40.50.10860">
    <property type="entry name" value="Leucine Dehydrogenase, chain A, domain 1"/>
    <property type="match status" value="1"/>
</dbReference>
<dbReference type="Gene3D" id="3.40.50.720">
    <property type="entry name" value="NAD(P)-binding Rossmann-like Domain"/>
    <property type="match status" value="1"/>
</dbReference>
<dbReference type="HAMAP" id="MF_00222">
    <property type="entry name" value="Shikimate_DH_AroE"/>
    <property type="match status" value="1"/>
</dbReference>
<dbReference type="InterPro" id="IPR046346">
    <property type="entry name" value="Aminoacid_DH-like_N_sf"/>
</dbReference>
<dbReference type="InterPro" id="IPR036291">
    <property type="entry name" value="NAD(P)-bd_dom_sf"/>
</dbReference>
<dbReference type="InterPro" id="IPR041121">
    <property type="entry name" value="SDH_C"/>
</dbReference>
<dbReference type="InterPro" id="IPR011342">
    <property type="entry name" value="Shikimate_DH"/>
</dbReference>
<dbReference type="InterPro" id="IPR013708">
    <property type="entry name" value="Shikimate_DH-bd_N"/>
</dbReference>
<dbReference type="InterPro" id="IPR022893">
    <property type="entry name" value="Shikimate_DH_fam"/>
</dbReference>
<dbReference type="InterPro" id="IPR006151">
    <property type="entry name" value="Shikm_DH/Glu-tRNA_Rdtase"/>
</dbReference>
<dbReference type="NCBIfam" id="TIGR00507">
    <property type="entry name" value="aroE"/>
    <property type="match status" value="1"/>
</dbReference>
<dbReference type="NCBIfam" id="NF001310">
    <property type="entry name" value="PRK00258.1-2"/>
    <property type="match status" value="1"/>
</dbReference>
<dbReference type="PANTHER" id="PTHR21089:SF1">
    <property type="entry name" value="BIFUNCTIONAL 3-DEHYDROQUINATE DEHYDRATASE_SHIKIMATE DEHYDROGENASE, CHLOROPLASTIC"/>
    <property type="match status" value="1"/>
</dbReference>
<dbReference type="PANTHER" id="PTHR21089">
    <property type="entry name" value="SHIKIMATE DEHYDROGENASE"/>
    <property type="match status" value="1"/>
</dbReference>
<dbReference type="Pfam" id="PF18317">
    <property type="entry name" value="SDH_C"/>
    <property type="match status" value="1"/>
</dbReference>
<dbReference type="Pfam" id="PF01488">
    <property type="entry name" value="Shikimate_DH"/>
    <property type="match status" value="1"/>
</dbReference>
<dbReference type="Pfam" id="PF08501">
    <property type="entry name" value="Shikimate_dh_N"/>
    <property type="match status" value="1"/>
</dbReference>
<dbReference type="SUPFAM" id="SSF53223">
    <property type="entry name" value="Aminoacid dehydrogenase-like, N-terminal domain"/>
    <property type="match status" value="1"/>
</dbReference>
<dbReference type="SUPFAM" id="SSF51735">
    <property type="entry name" value="NAD(P)-binding Rossmann-fold domains"/>
    <property type="match status" value="1"/>
</dbReference>
<protein>
    <recommendedName>
        <fullName evidence="1">Shikimate dehydrogenase (NADP(+))</fullName>
        <shortName evidence="1">SDH</shortName>
        <ecNumber evidence="1">1.1.1.25</ecNumber>
    </recommendedName>
</protein>
<organism>
    <name type="scientific">Neisseria mucosa</name>
    <dbReference type="NCBI Taxonomy" id="488"/>
    <lineage>
        <taxon>Bacteria</taxon>
        <taxon>Pseudomonadati</taxon>
        <taxon>Pseudomonadota</taxon>
        <taxon>Betaproteobacteria</taxon>
        <taxon>Neisseriales</taxon>
        <taxon>Neisseriaceae</taxon>
        <taxon>Neisseria</taxon>
    </lineage>
</organism>
<reference key="1">
    <citation type="journal article" date="1997" name="Mol. Microbiol.">
        <title>Interspecies recombination, and phylogenetic distortions, within the glutamine synthetase and shikimate dehydrogenase genes of Neisseria meningitidis and commensal Neisseria species.</title>
        <authorList>
            <person name="Zhou J."/>
            <person name="Bowler L.D."/>
            <person name="Spratt B.G."/>
        </authorList>
    </citation>
    <scope>NUCLEOTIDE SEQUENCE [GENOMIC DNA]</scope>
    <source>
        <strain>LNP 405</strain>
    </source>
</reference>
<name>AROE_NEIMU</name>